<name>RL21_PYRCJ</name>
<reference key="1">
    <citation type="submission" date="2007-02" db="EMBL/GenBank/DDBJ databases">
        <title>Complete sequence of Pyrobaculum calidifontis JCM 11548.</title>
        <authorList>
            <consortium name="US DOE Joint Genome Institute"/>
            <person name="Copeland A."/>
            <person name="Lucas S."/>
            <person name="Lapidus A."/>
            <person name="Barry K."/>
            <person name="Glavina del Rio T."/>
            <person name="Dalin E."/>
            <person name="Tice H."/>
            <person name="Pitluck S."/>
            <person name="Chain P."/>
            <person name="Malfatti S."/>
            <person name="Shin M."/>
            <person name="Vergez L."/>
            <person name="Schmutz J."/>
            <person name="Larimer F."/>
            <person name="Land M."/>
            <person name="Hauser L."/>
            <person name="Kyrpides N."/>
            <person name="Mikhailova N."/>
            <person name="Cozen A.E."/>
            <person name="Fitz-Gibbon S.T."/>
            <person name="House C.H."/>
            <person name="Saltikov C."/>
            <person name="Lowe T.M."/>
            <person name="Richardson P."/>
        </authorList>
    </citation>
    <scope>NUCLEOTIDE SEQUENCE [LARGE SCALE GENOMIC DNA]</scope>
    <source>
        <strain>DSM 21063 / JCM 11548 / VA1</strain>
    </source>
</reference>
<comment type="similarity">
    <text evidence="1">Belongs to the eukaryotic ribosomal protein eL21 family.</text>
</comment>
<gene>
    <name evidence="1" type="primary">rpl21e</name>
    <name type="ordered locus">Pcal_1729</name>
</gene>
<protein>
    <recommendedName>
        <fullName evidence="1">Large ribosomal subunit protein eL21</fullName>
    </recommendedName>
    <alternativeName>
        <fullName evidence="2">50S ribosomal protein L21e</fullName>
    </alternativeName>
</protein>
<keyword id="KW-0002">3D-structure</keyword>
<keyword id="KW-0687">Ribonucleoprotein</keyword>
<keyword id="KW-0689">Ribosomal protein</keyword>
<dbReference type="EMBL" id="CP000561">
    <property type="protein sequence ID" value="ABO09146.1"/>
    <property type="molecule type" value="Genomic_DNA"/>
</dbReference>
<dbReference type="RefSeq" id="WP_011850405.1">
    <property type="nucleotide sequence ID" value="NC_009073.1"/>
</dbReference>
<dbReference type="PDB" id="9E6Q">
    <property type="method" value="EM"/>
    <property type="resolution" value="1.95 A"/>
    <property type="chains" value="AS=1-99"/>
</dbReference>
<dbReference type="PDB" id="9E71">
    <property type="method" value="EM"/>
    <property type="resolution" value="2.36 A"/>
    <property type="chains" value="AS=1-99"/>
</dbReference>
<dbReference type="PDB" id="9E7F">
    <property type="method" value="EM"/>
    <property type="resolution" value="2.53 A"/>
    <property type="chains" value="AS=1-99"/>
</dbReference>
<dbReference type="PDBsum" id="9E6Q"/>
<dbReference type="PDBsum" id="9E71"/>
<dbReference type="PDBsum" id="9E7F"/>
<dbReference type="EMDB" id="EMD-47578"/>
<dbReference type="EMDB" id="EMD-47628"/>
<dbReference type="EMDB" id="EMD-47668"/>
<dbReference type="SMR" id="A3MWX9"/>
<dbReference type="STRING" id="410359.Pcal_1729"/>
<dbReference type="GeneID" id="4909716"/>
<dbReference type="KEGG" id="pcl:Pcal_1729"/>
<dbReference type="eggNOG" id="arCOG04129">
    <property type="taxonomic scope" value="Archaea"/>
</dbReference>
<dbReference type="HOGENOM" id="CLU_103610_1_1_2"/>
<dbReference type="OrthoDB" id="6295at2157"/>
<dbReference type="Proteomes" id="UP000001431">
    <property type="component" value="Chromosome"/>
</dbReference>
<dbReference type="GO" id="GO:1990904">
    <property type="term" value="C:ribonucleoprotein complex"/>
    <property type="evidence" value="ECO:0007669"/>
    <property type="project" value="UniProtKB-KW"/>
</dbReference>
<dbReference type="GO" id="GO:0005840">
    <property type="term" value="C:ribosome"/>
    <property type="evidence" value="ECO:0007669"/>
    <property type="project" value="UniProtKB-KW"/>
</dbReference>
<dbReference type="GO" id="GO:0003735">
    <property type="term" value="F:structural constituent of ribosome"/>
    <property type="evidence" value="ECO:0007669"/>
    <property type="project" value="InterPro"/>
</dbReference>
<dbReference type="GO" id="GO:0006412">
    <property type="term" value="P:translation"/>
    <property type="evidence" value="ECO:0007669"/>
    <property type="project" value="UniProtKB-UniRule"/>
</dbReference>
<dbReference type="FunFam" id="2.30.30.70:FF:000001">
    <property type="entry name" value="60S ribosomal protein L21"/>
    <property type="match status" value="1"/>
</dbReference>
<dbReference type="Gene3D" id="2.30.30.70">
    <property type="entry name" value="Ribosomal protein L21"/>
    <property type="match status" value="1"/>
</dbReference>
<dbReference type="HAMAP" id="MF_00369">
    <property type="entry name" value="Ribosomal_eL21"/>
    <property type="match status" value="1"/>
</dbReference>
<dbReference type="InterPro" id="IPR001147">
    <property type="entry name" value="Ribosomal_eL21"/>
</dbReference>
<dbReference type="InterPro" id="IPR022856">
    <property type="entry name" value="Ribosomal_eL21_arc"/>
</dbReference>
<dbReference type="InterPro" id="IPR018259">
    <property type="entry name" value="Ribosomal_eL21_CS"/>
</dbReference>
<dbReference type="InterPro" id="IPR036948">
    <property type="entry name" value="Ribosomal_eL21_sf"/>
</dbReference>
<dbReference type="InterPro" id="IPR008991">
    <property type="entry name" value="Translation_prot_SH3-like_sf"/>
</dbReference>
<dbReference type="NCBIfam" id="NF003303">
    <property type="entry name" value="PRK04306.1"/>
    <property type="match status" value="1"/>
</dbReference>
<dbReference type="PANTHER" id="PTHR20981">
    <property type="entry name" value="60S RIBOSOMAL PROTEIN L21"/>
    <property type="match status" value="1"/>
</dbReference>
<dbReference type="Pfam" id="PF01157">
    <property type="entry name" value="Ribosomal_L21e"/>
    <property type="match status" value="1"/>
</dbReference>
<dbReference type="SUPFAM" id="SSF50104">
    <property type="entry name" value="Translation proteins SH3-like domain"/>
    <property type="match status" value="1"/>
</dbReference>
<dbReference type="PROSITE" id="PS01171">
    <property type="entry name" value="RIBOSOMAL_L21E"/>
    <property type="match status" value="1"/>
</dbReference>
<organism>
    <name type="scientific">Pyrobaculum calidifontis (strain DSM 21063 / JCM 11548 / VA1)</name>
    <dbReference type="NCBI Taxonomy" id="410359"/>
    <lineage>
        <taxon>Archaea</taxon>
        <taxon>Thermoproteota</taxon>
        <taxon>Thermoprotei</taxon>
        <taxon>Thermoproteales</taxon>
        <taxon>Thermoproteaceae</taxon>
        <taxon>Pyrobaculum</taxon>
    </lineage>
</organism>
<evidence type="ECO:0000255" key="1">
    <source>
        <dbReference type="HAMAP-Rule" id="MF_00369"/>
    </source>
</evidence>
<evidence type="ECO:0000305" key="2"/>
<feature type="chain" id="PRO_1000007128" description="Large ribosomal subunit protein eL21">
    <location>
        <begin position="1"/>
        <end position="99"/>
    </location>
</feature>
<accession>A3MWX9</accession>
<proteinExistence type="evidence at protein level"/>
<sequence>MVKRTHGYRYKSRKLLSKAPRERGMSGLSRLLYEYKPGDKVVIDIDPTFISTAPHRRYQGKVGVVIGTRGRAYVIETYIGDKKKIIITTPEHLRPHLGG</sequence>